<organism>
    <name type="scientific">Encephalitozoon cuniculi (strain GB-M1)</name>
    <name type="common">Microsporidian parasite</name>
    <dbReference type="NCBI Taxonomy" id="284813"/>
    <lineage>
        <taxon>Eukaryota</taxon>
        <taxon>Fungi</taxon>
        <taxon>Fungi incertae sedis</taxon>
        <taxon>Microsporidia</taxon>
        <taxon>Unikaryonidae</taxon>
        <taxon>Encephalitozoon</taxon>
    </lineage>
</organism>
<evidence type="ECO:0000256" key="1">
    <source>
        <dbReference type="SAM" id="MobiDB-lite"/>
    </source>
</evidence>
<evidence type="ECO:0000305" key="2"/>
<feature type="chain" id="PRO_0000223149" description="UPF0329 protein ECU02_0050">
    <location>
        <begin position="1"/>
        <end position="523"/>
    </location>
</feature>
<feature type="region of interest" description="Disordered" evidence="1">
    <location>
        <begin position="326"/>
        <end position="386"/>
    </location>
</feature>
<feature type="compositionally biased region" description="Basic residues" evidence="1">
    <location>
        <begin position="330"/>
        <end position="339"/>
    </location>
</feature>
<feature type="compositionally biased region" description="Basic and acidic residues" evidence="1">
    <location>
        <begin position="344"/>
        <end position="353"/>
    </location>
</feature>
<feature type="compositionally biased region" description="Acidic residues" evidence="1">
    <location>
        <begin position="354"/>
        <end position="368"/>
    </location>
</feature>
<dbReference type="EMBL" id="AL590442">
    <property type="protein sequence ID" value="CAD25036.1"/>
    <property type="molecule type" value="Genomic_DNA"/>
</dbReference>
<dbReference type="RefSeq" id="NP_584532.1">
    <property type="nucleotide sequence ID" value="NM_001040721.1"/>
</dbReference>
<dbReference type="SMR" id="Q8SWH7"/>
<dbReference type="STRING" id="284813.Q8SWH7"/>
<dbReference type="GeneID" id="858522"/>
<dbReference type="KEGG" id="ecu:ECU02_0050"/>
<dbReference type="VEuPathDB" id="MicrosporidiaDB:ECU02_0050"/>
<dbReference type="HOGENOM" id="CLU_035434_0_0_1"/>
<dbReference type="InParanoid" id="Q8SWH7"/>
<dbReference type="OrthoDB" id="2162691at2759"/>
<dbReference type="Proteomes" id="UP000000819">
    <property type="component" value="Chromosome II"/>
</dbReference>
<dbReference type="InterPro" id="IPR022115">
    <property type="entry name" value="DUF3654"/>
</dbReference>
<dbReference type="InterPro" id="IPR011667">
    <property type="entry name" value="UPF0329"/>
</dbReference>
<dbReference type="Pfam" id="PF07753">
    <property type="entry name" value="DUF1609"/>
    <property type="match status" value="1"/>
</dbReference>
<dbReference type="Pfam" id="PF12376">
    <property type="entry name" value="DUF3654"/>
    <property type="match status" value="1"/>
</dbReference>
<reference key="1">
    <citation type="journal article" date="2001" name="Nature">
        <title>Genome sequence and gene compaction of the eukaryote parasite Encephalitozoon cuniculi.</title>
        <authorList>
            <person name="Katinka M.D."/>
            <person name="Duprat S."/>
            <person name="Cornillot E."/>
            <person name="Metenier G."/>
            <person name="Thomarat F."/>
            <person name="Prensier G."/>
            <person name="Barbe V."/>
            <person name="Peyretaillade E."/>
            <person name="Brottier P."/>
            <person name="Wincker P."/>
            <person name="Delbac F."/>
            <person name="El Alaoui H."/>
            <person name="Peyret P."/>
            <person name="Saurin W."/>
            <person name="Gouy M."/>
            <person name="Weissenbach J."/>
            <person name="Vivares C.P."/>
        </authorList>
    </citation>
    <scope>NUCLEOTIDE SEQUENCE [LARGE SCALE GENOMIC DNA]</scope>
    <source>
        <strain>GB-M1</strain>
    </source>
</reference>
<name>Y205_ENCCU</name>
<accession>Q8SWH7</accession>
<proteinExistence type="inferred from homology"/>
<sequence length="523" mass="59963">MRWKYAAWILIAVVDVMCCSSEEKSASVSFVTRPGSQVIAFPFIFVGHSIVVLPTTKYSNLKRNAKSMEDLTFLLSNLSHVVWSLTIDATVYKDGGRLEKLFDKRMRGYLDGVSLDVLRMYVNGSKTFSELLQIVYERTFECDSRRSRQMARYGESLIREIDNMIESMPAEMSEEEKEKMRSDLNNNRKYVESFHDTEKWRQVVEAEKMVCNTCKEICLGLKEEELMGLLAEGSAKKYIKASAGESKVSSTVYPEYIVVDISLLLDAHREHGGDVTKELVKQMLLGKKEEEIDKRYIGKVANAVKERRRRGEKEIEKRVKKLLRDEEKAKSKKRGKRKSVGVSEAKEEEKKESETEEVEAGEEVEMPSEEVGGARRKTGKKSEGGRKRYKIHRRVLRWRKSPEKIKEEWDKGSEERWRGKSLEEIREQKVFHDIMGVLELLRSPDADRFFMDTGDYTKGGSERQRMVAIGVLESGGKRMLGVVEVGTFKDCPSGCPVVYHLMFRVTGIEGMGDVMRRGGGQSW</sequence>
<protein>
    <recommendedName>
        <fullName>UPF0329 protein ECU02_0050</fullName>
    </recommendedName>
</protein>
<gene>
    <name type="ordered locus">ECU02_0050</name>
</gene>
<keyword id="KW-1185">Reference proteome</keyword>
<comment type="similarity">
    <text evidence="2">Belongs to the UPF0329 family.</text>
</comment>